<accession>Q12UA1</accession>
<gene>
    <name evidence="1" type="primary">rps8e</name>
    <name type="ordered locus">Mbur_2101</name>
</gene>
<reference key="1">
    <citation type="journal article" date="2009" name="ISME J.">
        <title>The genome sequence of the psychrophilic archaeon, Methanococcoides burtonii: the role of genome evolution in cold adaptation.</title>
        <authorList>
            <person name="Allen M.A."/>
            <person name="Lauro F.M."/>
            <person name="Williams T.J."/>
            <person name="Burg D."/>
            <person name="Siddiqui K.S."/>
            <person name="De Francisci D."/>
            <person name="Chong K.W."/>
            <person name="Pilak O."/>
            <person name="Chew H.H."/>
            <person name="De Maere M.Z."/>
            <person name="Ting L."/>
            <person name="Katrib M."/>
            <person name="Ng C."/>
            <person name="Sowers K.R."/>
            <person name="Galperin M.Y."/>
            <person name="Anderson I.J."/>
            <person name="Ivanova N."/>
            <person name="Dalin E."/>
            <person name="Martinez M."/>
            <person name="Lapidus A."/>
            <person name="Hauser L."/>
            <person name="Land M."/>
            <person name="Thomas T."/>
            <person name="Cavicchioli R."/>
        </authorList>
    </citation>
    <scope>NUCLEOTIDE SEQUENCE [LARGE SCALE GENOMIC DNA]</scope>
    <source>
        <strain>DSM 6242 / NBRC 107633 / OCM 468 / ACE-M</strain>
    </source>
</reference>
<sequence>MQFQGRSRRKYTGAKLKSARGKRKFELGREPAATHVNDTKRKNVPTHGGNRKVRLLQENIANVTNPADGKTIVSAIETVVDNAANAHYVRRNIITKGSVIQTAAGNARVTSRPGQDGVVNAILIE</sequence>
<comment type="subunit">
    <text evidence="1">Part of the 30S ribosomal subunit.</text>
</comment>
<comment type="similarity">
    <text evidence="1">Belongs to the eukaryotic ribosomal protein eS8 family.</text>
</comment>
<evidence type="ECO:0000255" key="1">
    <source>
        <dbReference type="HAMAP-Rule" id="MF_00029"/>
    </source>
</evidence>
<evidence type="ECO:0000256" key="2">
    <source>
        <dbReference type="SAM" id="MobiDB-lite"/>
    </source>
</evidence>
<evidence type="ECO:0000305" key="3"/>
<feature type="chain" id="PRO_0000304170" description="Small ribosomal subunit protein eS8">
    <location>
        <begin position="1"/>
        <end position="125"/>
    </location>
</feature>
<feature type="region of interest" description="Disordered" evidence="2">
    <location>
        <begin position="1"/>
        <end position="34"/>
    </location>
</feature>
<feature type="compositionally biased region" description="Basic residues" evidence="2">
    <location>
        <begin position="1"/>
        <end position="23"/>
    </location>
</feature>
<protein>
    <recommendedName>
        <fullName evidence="1">Small ribosomal subunit protein eS8</fullName>
    </recommendedName>
    <alternativeName>
        <fullName evidence="3">30S ribosomal protein S8e</fullName>
    </alternativeName>
</protein>
<name>RS8E_METBU</name>
<dbReference type="EMBL" id="CP000300">
    <property type="protein sequence ID" value="ABE52975.1"/>
    <property type="molecule type" value="Genomic_DNA"/>
</dbReference>
<dbReference type="RefSeq" id="WP_011500115.1">
    <property type="nucleotide sequence ID" value="NC_007955.1"/>
</dbReference>
<dbReference type="SMR" id="Q12UA1"/>
<dbReference type="STRING" id="259564.Mbur_2101"/>
<dbReference type="GeneID" id="3998183"/>
<dbReference type="KEGG" id="mbu:Mbur_2101"/>
<dbReference type="HOGENOM" id="CLU_080597_2_1_2"/>
<dbReference type="OrthoDB" id="372305at2157"/>
<dbReference type="Proteomes" id="UP000001979">
    <property type="component" value="Chromosome"/>
</dbReference>
<dbReference type="GO" id="GO:1990904">
    <property type="term" value="C:ribonucleoprotein complex"/>
    <property type="evidence" value="ECO:0007669"/>
    <property type="project" value="UniProtKB-KW"/>
</dbReference>
<dbReference type="GO" id="GO:0005840">
    <property type="term" value="C:ribosome"/>
    <property type="evidence" value="ECO:0007669"/>
    <property type="project" value="UniProtKB-KW"/>
</dbReference>
<dbReference type="GO" id="GO:0003735">
    <property type="term" value="F:structural constituent of ribosome"/>
    <property type="evidence" value="ECO:0007669"/>
    <property type="project" value="InterPro"/>
</dbReference>
<dbReference type="GO" id="GO:0006412">
    <property type="term" value="P:translation"/>
    <property type="evidence" value="ECO:0007669"/>
    <property type="project" value="UniProtKB-UniRule"/>
</dbReference>
<dbReference type="CDD" id="cd11382">
    <property type="entry name" value="Ribosomal_S8e"/>
    <property type="match status" value="1"/>
</dbReference>
<dbReference type="Gene3D" id="2.40.10.310">
    <property type="match status" value="1"/>
</dbReference>
<dbReference type="HAMAP" id="MF_00029">
    <property type="entry name" value="Ribosomal_eS8"/>
    <property type="match status" value="1"/>
</dbReference>
<dbReference type="InterPro" id="IPR001047">
    <property type="entry name" value="Ribosomal_eS8"/>
</dbReference>
<dbReference type="InterPro" id="IPR018283">
    <property type="entry name" value="Ribosomal_eS8_CS"/>
</dbReference>
<dbReference type="InterPro" id="IPR020919">
    <property type="entry name" value="Ribosomal_protein_eS8_arc"/>
</dbReference>
<dbReference type="InterPro" id="IPR022309">
    <property type="entry name" value="Ribosomal_Se8/biogenesis_NSA2"/>
</dbReference>
<dbReference type="NCBIfam" id="TIGR00307">
    <property type="entry name" value="eS8"/>
    <property type="match status" value="1"/>
</dbReference>
<dbReference type="PANTHER" id="PTHR10394">
    <property type="entry name" value="40S RIBOSOMAL PROTEIN S8"/>
    <property type="match status" value="1"/>
</dbReference>
<dbReference type="Pfam" id="PF01201">
    <property type="entry name" value="Ribosomal_S8e"/>
    <property type="match status" value="1"/>
</dbReference>
<dbReference type="PROSITE" id="PS01193">
    <property type="entry name" value="RIBOSOMAL_S8E"/>
    <property type="match status" value="1"/>
</dbReference>
<organism>
    <name type="scientific">Methanococcoides burtonii (strain DSM 6242 / NBRC 107633 / OCM 468 / ACE-M)</name>
    <dbReference type="NCBI Taxonomy" id="259564"/>
    <lineage>
        <taxon>Archaea</taxon>
        <taxon>Methanobacteriati</taxon>
        <taxon>Methanobacteriota</taxon>
        <taxon>Stenosarchaea group</taxon>
        <taxon>Methanomicrobia</taxon>
        <taxon>Methanosarcinales</taxon>
        <taxon>Methanosarcinaceae</taxon>
        <taxon>Methanococcoides</taxon>
    </lineage>
</organism>
<keyword id="KW-0687">Ribonucleoprotein</keyword>
<keyword id="KW-0689">Ribosomal protein</keyword>
<proteinExistence type="inferred from homology"/>